<proteinExistence type="evidence at protein level"/>
<gene>
    <name type="primary">fap1</name>
</gene>
<name>FAP1_STRPA</name>
<comment type="function">
    <text evidence="4 8">The major structural element of fimbriae. Required for adherence to saliva-coated hydroxyapatite beads (SHA), an in vitro tooth model. A Fap1-dependent increase in adherence is seen as the pH is reduced from pH 8 to pH 5.</text>
</comment>
<comment type="subcellular location">
    <subcellularLocation>
        <location>Cytoplasm</location>
    </subcellularLocation>
    <subcellularLocation>
        <location>Secreted</location>
    </subcellularLocation>
    <subcellularLocation>
        <location>Secreted</location>
        <location>Cell wall</location>
        <topology>Peptidoglycan-anchor</topology>
    </subcellularLocation>
    <subcellularLocation>
        <location>Fimbrium</location>
    </subcellularLocation>
    <text>Primarily but not exclusively exported by the accessory SecA2/SecY2 protein translocation apparatus.</text>
</comment>
<comment type="induction">
    <text evidence="4 8">Low expression in early log phase, it increases until stationary phase (at protein level). A monocistronic transcript.</text>
</comment>
<comment type="domain">
    <text evidence="4">Has short and long regions consisting of (E/V/I)S dipeptide repeats. These Ser-rich regions have 28 and 1000 repeats respectively.</text>
</comment>
<comment type="PTM">
    <text evidence="1 5 6 8">Glycosylated; occurs within the cytoplasm (PubMed:16997950, PubMed:20164186, PubMed:9632253). It is probable that most of the Ser residues in SSR1 and SSR2 are O-GlcNAcylated. Sequential glycosylation by sugar transferases are able to generate complex sugar polymorphisms (By similarity).</text>
</comment>
<comment type="disruption phenotype">
    <text evidence="4 8">Loss of fimbriae on the cell surface, loss of adherence to saliva-coated hydroxyapatite beads (SAH), an in vitro tooth model.</text>
</comment>
<comment type="similarity">
    <text evidence="9">Belongs to the serine-rich repeat protein (SRRP) family.</text>
</comment>
<comment type="caution">
    <text evidence="9">It is uncertain whether Met-1 or Met-18 is the initiator.</text>
</comment>
<comment type="sequence caution" evidence="9">
    <conflict type="erroneous initiation">
        <sequence resource="EMBL-CDS" id="AAC79868"/>
    </conflict>
    <text>Truncated N-terminus.</text>
</comment>
<organism>
    <name type="scientific">Streptococcus parasanguinis</name>
    <dbReference type="NCBI Taxonomy" id="1318"/>
    <lineage>
        <taxon>Bacteria</taxon>
        <taxon>Bacillati</taxon>
        <taxon>Bacillota</taxon>
        <taxon>Bacilli</taxon>
        <taxon>Lactobacillales</taxon>
        <taxon>Streptococcaceae</taxon>
        <taxon>Streptococcus</taxon>
    </lineage>
</organism>
<sequence length="2587" mass="265063">MGKYKRAGETSRKTRVKMHKSGKNWVRTLISQIGLMHFLGGSISEKKINVDVYEQKNISASTILKGAVALGALTGATVVSGNVFADETVLAKETTLTTTDANEVKLSSENFDSEKAEEKISLSQSESASESVSESISESVSESVSTSESVSESVSESVSESISESVSESISESISESVSESTSTSIVLSESGAASGNKATSKGTEEKQDSVRENLDKMISEAEVLNDMAARKLITLDAEQQLELMKSLVATQSQLEATKNLIGDPNATVADLQIAYTTLGNNTQALGNELIKLNPNGQIYAVLNNTEASRAATLRSTTTGTKTTFTISDFSNGGTQYYWAGGNANNLKNPISSISAVYDSATGKISWTVEYDPTTILKSPALKTLKTYTGIYIDTSSDSKLSTPTNVLIDGAATNPVTNFYGNGSKGIEYVSKGTTKGVTKHTITFDTAFSGRANDLADLKIKMLAATTLSDPHFYEDGSKGNYGRYNGQTAPYVIANDSGTAIGGYQVSGVNADSIPSDTTSQSESTSKSESTSKSISESVIESISESVIGSVSESVSESVSESVSESITESVSESVSESISESVSESVSESISESVSESVSESISESVSESVSESISESVSESVSESISESISESVSESVSESISESVSESVSESISESVSESVSESISESVSESVSESISESVSESVSESISESVSESVSESISESVSESVSESISESVSESVSESISESVSESVSESISESVSESVSESISESVSESVSESISESVSESVSESVSESVSESVSESISESVSESVSESVSESVSESVSESVSESISESVSESVSESISESVSESVSESISESVSESVSESISESVSESVSESISESVSESVSESISESVSESVSESISESVSESVSESISESVSESVSESISESVSESVSESISESVSESVSESVSESVSESVSESVSESVSESISESVSESVSESISESVSESVSESISESVSESVSESISESVSESVSESISESVSESVSESVSESVSESVSESVSESVSESISESVSESVSESVSESISESVSESVSESISESVSESVSESISESVSESVSESVSESVSESVSESISESVSESVSESISESVSESVSESISESVSESVSESISESVSESVSESISESVSESVSESISESVSESVSESVSESVSESVSESISESVSESVSESISESVSESVSESVSESISESVSESVSESISESVSESVSESISESVSESVSESISESVSESVSESVSESVSESVSESVSESVSESVSESVSESISESVSESVSESVSESISESVSESVSESISESVSESVSESISESVSESVSESISESVSESVSESISESVSESVSESISESVSESVSESVSESVSESVSESISESVSESVSESISESVSESVSESISESVSESVSESISESVSESVSESVSESISESVSESVSESISESVSESVSESISESVSESVSESVSESVSESVSESVSESVSESVSESISESVSESVSESISESVSESVSESISESVSESVSESISESVSESVSESISESVSESVSESISESVSESVSESISESVSESVSESVSESVSESVSESISESVSESVSESISESVSESVSESVSESVSESVSESVSESVSESVSESISESVSESVSESVSESVSESVSESISESVSESVSESISESVSESVSESISESVSESVSESISESVSESVSESISESVSESVSESISESVSESVSESISESVSESVSESVSESVSESVSESVSESVSESISESVSESVSESISESVSESVSESISESVSESVSESVSESVSESVSESISESVSESVSESISESVSESVSESISESVSESVSESISESVSESVSESVSESISESVSESVSESISESVSESVSESISESVSESVSESISESVSESVSESISESVSESVSESISESVSESVSESVSESVSESVSESISESVSESISESVSESVSESISESVSESVSESISESVSESVSESISESVSESVSESISESVSESVSESISESVSESVSESISESVSESVSESISESVSESVSESVSESISESVSESVSESISESVSESVSESISESVSESVSESVSESVSESVSESVSESVSESVSESISESVSESVSESISESVSESVSESISESVSESVSESISESVSESVSESISESVSESVSESISESVSESVSESISESVSESVSESVSESVSESVSESISESVSESVSESVSESISESVSESVSESISESVSESVSESVSESVSESVSESVSESVSESVSESISESVSESVSESVSESVSESVSESISESVSESVSESISESVSESVSESISESVSESVSESISESVSESVSESISESVSESVSESISESVSESVSESISESVSESVSESISESVSESVSESVSESISESVSESVSESISESVSESVSESISESVSESVSESISESVSESVSESVSESVSESVSESVSESVSESISESVSESVSESISESVSESVSESVSESVSESVSESISESVSESISESVSESVSESISESVSESVSESISERTLPNTGENVSSSLGLVGLSGLLFGALLGRKKRKSEDAE</sequence>
<protein>
    <recommendedName>
        <fullName>Fap1 adhesin</fullName>
    </recommendedName>
    <alternativeName>
        <fullName evidence="9">Adhesin Fap1</fullName>
    </alternativeName>
    <alternativeName>
        <fullName>Fimbriae-associated protein Fap1</fullName>
    </alternativeName>
    <alternativeName>
        <fullName>Serine-rich repeat protein Fap1</fullName>
    </alternativeName>
</protein>
<feature type="signal peptide" evidence="8">
    <location>
        <begin position="1"/>
        <end position="85"/>
    </location>
</feature>
<feature type="chain" id="PRO_0000414882" description="Fap1 adhesin">
    <location>
        <begin position="86"/>
        <end position="2554"/>
    </location>
</feature>
<feature type="propeptide" id="PRO_0000414883" description="Removed by sortase" evidence="2">
    <location>
        <begin position="2555"/>
        <end position="2587"/>
    </location>
</feature>
<feature type="region of interest" description="Ser-rich region 1, SRR1">
    <location>
        <begin position="107"/>
        <end position="195"/>
    </location>
</feature>
<feature type="region of interest" description="Disordered" evidence="3">
    <location>
        <begin position="107"/>
        <end position="158"/>
    </location>
</feature>
<feature type="region of interest" description="Disordered" evidence="3">
    <location>
        <begin position="173"/>
        <end position="212"/>
    </location>
</feature>
<feature type="region of interest" description="Sufficient to block adherence to beads">
    <location>
        <begin position="191"/>
        <end position="522"/>
    </location>
</feature>
<feature type="region of interest" description="Disordered" evidence="3">
    <location>
        <begin position="515"/>
        <end position="539"/>
    </location>
</feature>
<feature type="region of interest" description="Ser-rich region 2, SRR2">
    <location>
        <begin position="516"/>
        <end position="2561"/>
    </location>
</feature>
<feature type="region of interest" description="Disordered" evidence="3">
    <location>
        <begin position="568"/>
        <end position="2558"/>
    </location>
</feature>
<feature type="region of interest" description="Required for localization to cell wall, fimbriae formation and adherence to saliva-coated hydroxyapatite beads (SHA) but not secretion">
    <location>
        <begin position="2367"/>
        <end position="2587"/>
    </location>
</feature>
<feature type="short sequence motif" description="LPXTG sorting signal" evidence="2">
    <location>
        <begin position="2551"/>
        <end position="2555"/>
    </location>
</feature>
<feature type="compositionally biased region" description="Low complexity" evidence="3">
    <location>
        <begin position="121"/>
        <end position="158"/>
    </location>
</feature>
<feature type="compositionally biased region" description="Low complexity" evidence="3">
    <location>
        <begin position="173"/>
        <end position="191"/>
    </location>
</feature>
<feature type="compositionally biased region" description="Polar residues" evidence="3">
    <location>
        <begin position="192"/>
        <end position="202"/>
    </location>
</feature>
<feature type="compositionally biased region" description="Basic and acidic residues" evidence="3">
    <location>
        <begin position="203"/>
        <end position="212"/>
    </location>
</feature>
<feature type="compositionally biased region" description="Low complexity" evidence="3">
    <location>
        <begin position="519"/>
        <end position="539"/>
    </location>
</feature>
<feature type="compositionally biased region" description="Low complexity" evidence="3">
    <location>
        <begin position="568"/>
        <end position="2545"/>
    </location>
</feature>
<feature type="modified residue" description="Pentaglycyl murein peptidoglycan amidated threonine" evidence="2">
    <location>
        <position position="2554"/>
    </location>
</feature>
<feature type="mutagenesis site" description="Loss of adherence to SHA." evidence="7">
    <original>I</original>
    <variation>A</variation>
    <location>
        <position position="219"/>
    </location>
</feature>
<feature type="mutagenesis site" description="Loss of adherence to SHA." evidence="7">
    <original>E</original>
    <variation>A</variation>
    <location>
        <position position="223"/>
    </location>
</feature>
<feature type="mutagenesis site" description="Loss of adherence to SHA." evidence="7">
    <original>D</original>
    <variation>A</variation>
    <location>
        <position position="227"/>
    </location>
</feature>
<feature type="mutagenesis site" description="Loss of adherence to SHA." evidence="7">
    <original>L</original>
    <variation>A</variation>
    <location>
        <position position="248"/>
    </location>
</feature>
<feature type="mutagenesis site" description="Loss of adherence to SHA." evidence="7">
    <original>V</original>
    <variation>A</variation>
    <location>
        <position position="249"/>
    </location>
</feature>
<feature type="mutagenesis site" description="Adheres to SHA." evidence="7">
    <original>E</original>
    <variation>A</variation>
    <location>
        <position position="289"/>
    </location>
</feature>
<feature type="mutagenesis site" description="Loss of adherence to SHA." evidence="7">
    <original>IL</original>
    <variation>AA</variation>
    <location>
        <begin position="376"/>
        <end position="377"/>
    </location>
</feature>
<feature type="mutagenesis site" description="Loss of adherence to SHA." evidence="7">
    <original>L</original>
    <variation>A</variation>
    <location>
        <position position="385"/>
    </location>
</feature>
<feature type="mutagenesis site" description="Loss of adherence to SHA." evidence="7">
    <original>L</original>
    <variation>A</variation>
    <location>
        <position position="470"/>
    </location>
</feature>
<feature type="mutagenesis site" description="Loss of adherence to SHA." evidence="7">
    <original>N</original>
    <variation>A</variation>
    <location>
        <position position="488"/>
    </location>
</feature>
<feature type="mutagenesis site" description="Loss of adherence to SHA." evidence="7">
    <original>Q</original>
    <variation>A</variation>
    <location>
        <position position="490"/>
    </location>
</feature>
<feature type="mutagenesis site" description="Loss of adherence to SHA." evidence="7">
    <original>I</original>
    <variation>A</variation>
    <location>
        <position position="496"/>
    </location>
</feature>
<feature type="sequence conflict" description="In Ref. 1; AAC79868." evidence="9" ref="1">
    <original>K</original>
    <variation>E</variation>
    <location>
        <position position="461"/>
    </location>
</feature>
<feature type="sequence conflict" description="In Ref. 1; AAC79868." evidence="9" ref="1">
    <original>T</original>
    <variation>A</variation>
    <location>
        <position position="528"/>
    </location>
</feature>
<feature type="sequence conflict" description="In Ref. 1; AAC79868." evidence="9" ref="1">
    <original>V</original>
    <variation>P</variation>
    <location>
        <position position="1146"/>
    </location>
</feature>
<feature type="sequence conflict" description="In Ref. 1; AAC79868." evidence="9" ref="1">
    <original>I</original>
    <variation>S</variation>
    <location>
        <position position="1226"/>
    </location>
</feature>
<feature type="sequence conflict" description="In Ref. 1; AAC79868." evidence="9" ref="1">
    <original>V</original>
    <variation>M</variation>
    <location>
        <position position="1830"/>
    </location>
</feature>
<feature type="sequence conflict" description="In Ref. 1; AAC79868." evidence="9" ref="1">
    <original>S</original>
    <variation>P</variation>
    <location>
        <position position="1861"/>
    </location>
</feature>
<feature type="sequence conflict" description="In Ref. 1; AAC79868." evidence="9" ref="1">
    <original>S</original>
    <variation>T</variation>
    <location>
        <position position="1885"/>
    </location>
</feature>
<feature type="helix" evidence="11">
    <location>
        <begin position="216"/>
        <end position="234"/>
    </location>
</feature>
<feature type="helix" evidence="11">
    <location>
        <begin position="238"/>
        <end position="263"/>
    </location>
</feature>
<feature type="strand" evidence="11">
    <location>
        <begin position="264"/>
        <end position="267"/>
    </location>
</feature>
<feature type="helix" evidence="11">
    <location>
        <begin position="269"/>
        <end position="293"/>
    </location>
</feature>
<feature type="strand" evidence="10">
    <location>
        <begin position="322"/>
        <end position="326"/>
    </location>
</feature>
<feature type="helix" evidence="10">
    <location>
        <begin position="327"/>
        <end position="329"/>
    </location>
</feature>
<feature type="turn" evidence="10">
    <location>
        <begin position="330"/>
        <end position="332"/>
    </location>
</feature>
<feature type="strand" evidence="10">
    <location>
        <begin position="336"/>
        <end position="339"/>
    </location>
</feature>
<feature type="strand" evidence="10">
    <location>
        <begin position="351"/>
        <end position="359"/>
    </location>
</feature>
<feature type="turn" evidence="10">
    <location>
        <begin position="360"/>
        <end position="362"/>
    </location>
</feature>
<feature type="strand" evidence="10">
    <location>
        <begin position="364"/>
        <end position="371"/>
    </location>
</feature>
<feature type="turn" evidence="10">
    <location>
        <begin position="373"/>
        <end position="377"/>
    </location>
</feature>
<feature type="helix" evidence="10">
    <location>
        <begin position="380"/>
        <end position="382"/>
    </location>
</feature>
<feature type="strand" evidence="10">
    <location>
        <begin position="386"/>
        <end position="394"/>
    </location>
</feature>
<feature type="strand" evidence="10">
    <location>
        <begin position="399"/>
        <end position="409"/>
    </location>
</feature>
<feature type="strand" evidence="10">
    <location>
        <begin position="414"/>
        <end position="417"/>
    </location>
</feature>
<feature type="strand" evidence="10">
    <location>
        <begin position="427"/>
        <end position="434"/>
    </location>
</feature>
<feature type="strand" evidence="10">
    <location>
        <begin position="436"/>
        <end position="438"/>
    </location>
</feature>
<feature type="strand" evidence="10">
    <location>
        <begin position="442"/>
        <end position="450"/>
    </location>
</feature>
<feature type="helix" evidence="10">
    <location>
        <begin position="454"/>
        <end position="459"/>
    </location>
</feature>
<feature type="strand" evidence="10">
    <location>
        <begin position="461"/>
        <end position="471"/>
    </location>
</feature>
<feature type="strand" evidence="10">
    <location>
        <begin position="481"/>
        <end position="485"/>
    </location>
</feature>
<feature type="strand" evidence="10">
    <location>
        <begin position="487"/>
        <end position="490"/>
    </location>
</feature>
<feature type="strand" evidence="10">
    <location>
        <begin position="492"/>
        <end position="496"/>
    </location>
</feature>
<feature type="strand" evidence="10">
    <location>
        <begin position="498"/>
        <end position="510"/>
    </location>
</feature>
<feature type="turn" evidence="10">
    <location>
        <begin position="514"/>
        <end position="516"/>
    </location>
</feature>
<keyword id="KW-0002">3D-structure</keyword>
<keyword id="KW-0130">Cell adhesion</keyword>
<keyword id="KW-0134">Cell wall</keyword>
<keyword id="KW-0963">Cytoplasm</keyword>
<keyword id="KW-0903">Direct protein sequencing</keyword>
<keyword id="KW-0281">Fimbrium</keyword>
<keyword id="KW-0325">Glycoprotein</keyword>
<keyword id="KW-0572">Peptidoglycan-anchor</keyword>
<keyword id="KW-0964">Secreted</keyword>
<keyword id="KW-0732">Signal</keyword>
<keyword id="KW-0843">Virulence</keyword>
<reference key="1">
    <citation type="journal article" date="1999" name="Mol. Microbiol.">
        <title>Identification of dipeptide repeats and a cell wall sorting signal in the fimbriae-associated adhesin, Fap1, of Streptococcus parasanguis.</title>
        <authorList>
            <person name="Wu H."/>
            <person name="Fives-Taylor P.M."/>
        </authorList>
    </citation>
    <scope>NUCLEOTIDE SEQUENCE [GENOMIC DNA]</scope>
    <scope>FUNCTION</scope>
    <scope>SUBCELLULAR LOCATION</scope>
    <scope>DOMAIN</scope>
    <scope>INDUCTION</scope>
    <scope>DISRUPTION PHENOTYPE</scope>
    <source>
        <strain>FW213</strain>
    </source>
</reference>
<reference key="2">
    <citation type="journal article" date="2007" name="J. Bacteriol.">
        <title>Two gene determinants are differentially involved in the biogenesis of Fap1 precursors in Streptococcus parasanguis.</title>
        <authorList>
            <person name="Wu H."/>
            <person name="Bu S."/>
            <person name="Newell P."/>
            <person name="Chen Q."/>
            <person name="Fives-Taylor P."/>
        </authorList>
    </citation>
    <scope>NUCLEOTIDE SEQUENCE [GENOMIC DNA]</scope>
    <scope>SUBCELLULAR LOCATION</scope>
    <scope>PARTIAL EXPORT VIA THE ACCESSORY SECA2/SECY2 SYSTEM</scope>
    <scope>GLYCOSYLATION</scope>
    <source>
        <strain>FW213</strain>
    </source>
</reference>
<reference key="3">
    <citation type="journal article" date="1998" name="Mol. Microbiol.">
        <title>Isolation and characterization of Fap1, a fimbriae-associated adhesin of Streptococcus parasanguis FW213.</title>
        <authorList>
            <person name="Wu H."/>
            <person name="Mintz K.P."/>
            <person name="Ladha M."/>
            <person name="Fives-Taylor P.M."/>
        </authorList>
    </citation>
    <scope>PROTEIN SEQUENCE OF 86-106</scope>
    <scope>FUNCTION</scope>
    <scope>SUBCELLULAR LOCATION</scope>
    <scope>INDUCTION</scope>
    <scope>GLYCOSYLATION</scope>
    <scope>DISRUPTION PHENOTYPE</scope>
    <source>
        <strain>FW213</strain>
    </source>
</reference>
<reference key="4">
    <citation type="journal article" date="2010" name="J. Biol. Chem.">
        <title>A novel glucosyltransferase is required for glycosylation of a serine-rich adhesin and biofilm formation by Streptococcus parasanguinis.</title>
        <authorList>
            <person name="Zhou M."/>
            <person name="Zhu F."/>
            <person name="Dong S."/>
            <person name="Pritchard D.G."/>
            <person name="Wu H."/>
        </authorList>
    </citation>
    <scope>GLYCOSYLATION</scope>
    <source>
        <strain>FW213</strain>
    </source>
</reference>
<reference key="5">
    <citation type="journal article" date="2010" name="J. Biol. Chem.">
        <title>Structural insights into serine-rich fimbriae from gram-positive bacteria.</title>
        <authorList>
            <person name="Ramboarina S."/>
            <person name="Garnett J.A."/>
            <person name="Zhou M."/>
            <person name="Li Y."/>
            <person name="Peng Z."/>
            <person name="Taylor J.D."/>
            <person name="Lee W.C."/>
            <person name="Bodey A."/>
            <person name="Murray J.W."/>
            <person name="Alguel Y."/>
            <person name="Bergeron J."/>
            <person name="Bardiaux B."/>
            <person name="Sawyer E."/>
            <person name="Isaacson R."/>
            <person name="Tagliaferri C."/>
            <person name="Cota E."/>
            <person name="Nilges M."/>
            <person name="Simpson P."/>
            <person name="Ruiz T."/>
            <person name="Wu H."/>
            <person name="Matthews S."/>
        </authorList>
    </citation>
    <scope>X-RAY CRYSTALLOGRAPHY (2.90 ANGSTROMS) OF 191-513</scope>
    <scope>STRUCTURE BY NMR OF 213-93</scope>
    <scope>MUTAGENESIS OF ILE-219; GLU-223; ASP-227; LEU-248; VAL-249; GLU-289; 376-ILE-LEU-377; LEU-385; LEU-470; ASN-488; GLN-490 AND ILE-496</scope>
    <source>
        <strain>FW213</strain>
    </source>
</reference>
<evidence type="ECO:0000250" key="1">
    <source>
        <dbReference type="UniProtKB" id="A0A0H2URK1"/>
    </source>
</evidence>
<evidence type="ECO:0000255" key="2">
    <source>
        <dbReference type="PROSITE-ProRule" id="PRU00477"/>
    </source>
</evidence>
<evidence type="ECO:0000256" key="3">
    <source>
        <dbReference type="SAM" id="MobiDB-lite"/>
    </source>
</evidence>
<evidence type="ECO:0000269" key="4">
    <source>
    </source>
</evidence>
<evidence type="ECO:0000269" key="5">
    <source>
    </source>
</evidence>
<evidence type="ECO:0000269" key="6">
    <source>
    </source>
</evidence>
<evidence type="ECO:0000269" key="7">
    <source>
    </source>
</evidence>
<evidence type="ECO:0000269" key="8">
    <source>
    </source>
</evidence>
<evidence type="ECO:0000305" key="9"/>
<evidence type="ECO:0007829" key="10">
    <source>
        <dbReference type="PDB" id="2X12"/>
    </source>
</evidence>
<evidence type="ECO:0007829" key="11">
    <source>
        <dbReference type="PDB" id="3RGU"/>
    </source>
</evidence>
<accession>A1C3L3</accession>
<accession>Q9ZFF9</accession>
<dbReference type="EMBL" id="AF100426">
    <property type="protein sequence ID" value="AAC79868.1"/>
    <property type="status" value="ALT_INIT"/>
    <property type="molecule type" value="Genomic_DNA"/>
</dbReference>
<dbReference type="EMBL" id="DQ990875">
    <property type="protein sequence ID" value="ABL73998.1"/>
    <property type="molecule type" value="Genomic_DNA"/>
</dbReference>
<dbReference type="PIR" id="T17451">
    <property type="entry name" value="T17451"/>
</dbReference>
<dbReference type="PDB" id="2KUB">
    <property type="method" value="NMR"/>
    <property type="chains" value="A=213-293"/>
</dbReference>
<dbReference type="PDB" id="2X12">
    <property type="method" value="X-ray"/>
    <property type="resolution" value="2.90 A"/>
    <property type="chains" value="A/B=191-522"/>
</dbReference>
<dbReference type="PDB" id="3RGU">
    <property type="method" value="X-ray"/>
    <property type="resolution" value="3.00 A"/>
    <property type="chains" value="A/B/C/D=201-316"/>
</dbReference>
<dbReference type="PDBsum" id="2KUB"/>
<dbReference type="PDBsum" id="2X12"/>
<dbReference type="PDBsum" id="3RGU"/>
<dbReference type="SMR" id="A1C3L3"/>
<dbReference type="EvolutionaryTrace" id="A1C3L3"/>
<dbReference type="GO" id="GO:0005737">
    <property type="term" value="C:cytoplasm"/>
    <property type="evidence" value="ECO:0007669"/>
    <property type="project" value="UniProtKB-SubCell"/>
</dbReference>
<dbReference type="GO" id="GO:0005576">
    <property type="term" value="C:extracellular region"/>
    <property type="evidence" value="ECO:0007669"/>
    <property type="project" value="UniProtKB-SubCell"/>
</dbReference>
<dbReference type="GO" id="GO:0009289">
    <property type="term" value="C:pilus"/>
    <property type="evidence" value="ECO:0007669"/>
    <property type="project" value="UniProtKB-SubCell"/>
</dbReference>
<dbReference type="GO" id="GO:0007155">
    <property type="term" value="P:cell adhesion"/>
    <property type="evidence" value="ECO:0007669"/>
    <property type="project" value="UniProtKB-KW"/>
</dbReference>
<dbReference type="Gene3D" id="2.60.40.2010">
    <property type="match status" value="1"/>
</dbReference>
<dbReference type="Gene3D" id="1.20.5.420">
    <property type="entry name" value="Immunoglobulin FC, subunit C"/>
    <property type="match status" value="1"/>
</dbReference>
<dbReference type="InterPro" id="IPR007383">
    <property type="entry name" value="DUF445"/>
</dbReference>
<dbReference type="InterPro" id="IPR022263">
    <property type="entry name" value="KxYKxGKxW"/>
</dbReference>
<dbReference type="InterPro" id="IPR019931">
    <property type="entry name" value="LPXTG_anchor"/>
</dbReference>
<dbReference type="InterPro" id="IPR026465">
    <property type="entry name" value="Ser_adhes_glycop_N"/>
</dbReference>
<dbReference type="NCBIfam" id="TIGR03715">
    <property type="entry name" value="KxYKxGKxW"/>
    <property type="match status" value="1"/>
</dbReference>
<dbReference type="NCBIfam" id="TIGR01167">
    <property type="entry name" value="LPXTG_anchor"/>
    <property type="match status" value="1"/>
</dbReference>
<dbReference type="NCBIfam" id="TIGR04224">
    <property type="entry name" value="ser_adhes_Nterm"/>
    <property type="match status" value="1"/>
</dbReference>
<dbReference type="PANTHER" id="PTHR36489:SF1">
    <property type="entry name" value="G-PROTEIN COUPLED RECEPTORS FAMILY 1 PROFILE DOMAIN-CONTAINING PROTEIN"/>
    <property type="match status" value="1"/>
</dbReference>
<dbReference type="PANTHER" id="PTHR36489">
    <property type="entry name" value="PROTEIN-COUPLED RECEPTOR GPR1, PUTATIVE-RELATED"/>
    <property type="match status" value="1"/>
</dbReference>
<dbReference type="Pfam" id="PF04286">
    <property type="entry name" value="DUF445"/>
    <property type="match status" value="1"/>
</dbReference>
<dbReference type="Pfam" id="PF00746">
    <property type="entry name" value="Gram_pos_anchor"/>
    <property type="match status" value="1"/>
</dbReference>
<dbReference type="Pfam" id="PF19258">
    <property type="entry name" value="KxYKxGKxW_sig"/>
    <property type="match status" value="1"/>
</dbReference>
<dbReference type="PROSITE" id="PS50847">
    <property type="entry name" value="GRAM_POS_ANCHORING"/>
    <property type="match status" value="1"/>
</dbReference>